<sequence length="229" mass="25693">MANELTWHDVLAEEKQQPYFLNTLQTVASERQSGVTIYPPQKDVFNAFRFTELGDVKVVILGQDPYHGPGQAHGLAFSVRPGIAIPPSLLNMYKELENTIPGFTRPNHGYLESWARQGVLLLNTVLTVRAGQAHSHASLGWETFTDKVISLINQHREGVVFLLWGSHAQKKGAIIDKQRHHVLKAPHPSPLSAHRGFFGCNHFVLANQWLEQRGETPIDWMPVLPAESE</sequence>
<evidence type="ECO:0000255" key="1">
    <source>
        <dbReference type="HAMAP-Rule" id="MF_00148"/>
    </source>
</evidence>
<dbReference type="EC" id="3.2.2.27" evidence="1"/>
<dbReference type="EMBL" id="CP000946">
    <property type="protein sequence ID" value="ACA76764.1"/>
    <property type="molecule type" value="Genomic_DNA"/>
</dbReference>
<dbReference type="RefSeq" id="WP_001262716.1">
    <property type="nucleotide sequence ID" value="NZ_MTFT01000002.1"/>
</dbReference>
<dbReference type="SMR" id="B1IVP7"/>
<dbReference type="GeneID" id="93774506"/>
<dbReference type="KEGG" id="ecl:EcolC_1097"/>
<dbReference type="HOGENOM" id="CLU_032162_3_1_6"/>
<dbReference type="GO" id="GO:0005737">
    <property type="term" value="C:cytoplasm"/>
    <property type="evidence" value="ECO:0007669"/>
    <property type="project" value="UniProtKB-SubCell"/>
</dbReference>
<dbReference type="GO" id="GO:0004844">
    <property type="term" value="F:uracil DNA N-glycosylase activity"/>
    <property type="evidence" value="ECO:0007669"/>
    <property type="project" value="UniProtKB-UniRule"/>
</dbReference>
<dbReference type="GO" id="GO:0097510">
    <property type="term" value="P:base-excision repair, AP site formation via deaminated base removal"/>
    <property type="evidence" value="ECO:0007669"/>
    <property type="project" value="TreeGrafter"/>
</dbReference>
<dbReference type="CDD" id="cd10027">
    <property type="entry name" value="UDG-F1-like"/>
    <property type="match status" value="1"/>
</dbReference>
<dbReference type="FunFam" id="3.40.470.10:FF:000001">
    <property type="entry name" value="Uracil-DNA glycosylase"/>
    <property type="match status" value="1"/>
</dbReference>
<dbReference type="Gene3D" id="3.40.470.10">
    <property type="entry name" value="Uracil-DNA glycosylase-like domain"/>
    <property type="match status" value="1"/>
</dbReference>
<dbReference type="HAMAP" id="MF_00148">
    <property type="entry name" value="UDG"/>
    <property type="match status" value="1"/>
</dbReference>
<dbReference type="InterPro" id="IPR002043">
    <property type="entry name" value="UDG_fam1"/>
</dbReference>
<dbReference type="InterPro" id="IPR018085">
    <property type="entry name" value="Ura-DNA_Glyclase_AS"/>
</dbReference>
<dbReference type="InterPro" id="IPR005122">
    <property type="entry name" value="Uracil-DNA_glycosylase-like"/>
</dbReference>
<dbReference type="InterPro" id="IPR036895">
    <property type="entry name" value="Uracil-DNA_glycosylase-like_sf"/>
</dbReference>
<dbReference type="NCBIfam" id="NF003588">
    <property type="entry name" value="PRK05254.1-1"/>
    <property type="match status" value="1"/>
</dbReference>
<dbReference type="NCBIfam" id="NF003589">
    <property type="entry name" value="PRK05254.1-2"/>
    <property type="match status" value="1"/>
</dbReference>
<dbReference type="NCBIfam" id="NF003591">
    <property type="entry name" value="PRK05254.1-4"/>
    <property type="match status" value="1"/>
</dbReference>
<dbReference type="NCBIfam" id="NF003592">
    <property type="entry name" value="PRK05254.1-5"/>
    <property type="match status" value="1"/>
</dbReference>
<dbReference type="NCBIfam" id="TIGR00628">
    <property type="entry name" value="ung"/>
    <property type="match status" value="1"/>
</dbReference>
<dbReference type="PANTHER" id="PTHR11264">
    <property type="entry name" value="URACIL-DNA GLYCOSYLASE"/>
    <property type="match status" value="1"/>
</dbReference>
<dbReference type="PANTHER" id="PTHR11264:SF0">
    <property type="entry name" value="URACIL-DNA GLYCOSYLASE"/>
    <property type="match status" value="1"/>
</dbReference>
<dbReference type="Pfam" id="PF03167">
    <property type="entry name" value="UDG"/>
    <property type="match status" value="1"/>
</dbReference>
<dbReference type="SMART" id="SM00986">
    <property type="entry name" value="UDG"/>
    <property type="match status" value="1"/>
</dbReference>
<dbReference type="SMART" id="SM00987">
    <property type="entry name" value="UreE_C"/>
    <property type="match status" value="1"/>
</dbReference>
<dbReference type="SUPFAM" id="SSF52141">
    <property type="entry name" value="Uracil-DNA glycosylase-like"/>
    <property type="match status" value="1"/>
</dbReference>
<dbReference type="PROSITE" id="PS00130">
    <property type="entry name" value="U_DNA_GLYCOSYLASE"/>
    <property type="match status" value="1"/>
</dbReference>
<gene>
    <name evidence="1" type="primary">ung</name>
    <name type="ordered locus">EcolC_1097</name>
</gene>
<feature type="chain" id="PRO_1000076671" description="Uracil-DNA glycosylase">
    <location>
        <begin position="1"/>
        <end position="229"/>
    </location>
</feature>
<feature type="active site" description="Proton acceptor" evidence="1">
    <location>
        <position position="64"/>
    </location>
</feature>
<protein>
    <recommendedName>
        <fullName evidence="1">Uracil-DNA glycosylase</fullName>
        <shortName evidence="1">UDG</shortName>
        <ecNumber evidence="1">3.2.2.27</ecNumber>
    </recommendedName>
</protein>
<proteinExistence type="inferred from homology"/>
<organism>
    <name type="scientific">Escherichia coli (strain ATCC 8739 / DSM 1576 / NBRC 3972 / NCIMB 8545 / WDCM 00012 / Crooks)</name>
    <dbReference type="NCBI Taxonomy" id="481805"/>
    <lineage>
        <taxon>Bacteria</taxon>
        <taxon>Pseudomonadati</taxon>
        <taxon>Pseudomonadota</taxon>
        <taxon>Gammaproteobacteria</taxon>
        <taxon>Enterobacterales</taxon>
        <taxon>Enterobacteriaceae</taxon>
        <taxon>Escherichia</taxon>
    </lineage>
</organism>
<keyword id="KW-0963">Cytoplasm</keyword>
<keyword id="KW-0227">DNA damage</keyword>
<keyword id="KW-0234">DNA repair</keyword>
<keyword id="KW-0378">Hydrolase</keyword>
<accession>B1IVP7</accession>
<comment type="function">
    <text evidence="1">Excises uracil residues from the DNA which can arise as a result of misincorporation of dUMP residues by DNA polymerase or due to deamination of cytosine.</text>
</comment>
<comment type="catalytic activity">
    <reaction evidence="1">
        <text>Hydrolyzes single-stranded DNA or mismatched double-stranded DNA and polynucleotides, releasing free uracil.</text>
        <dbReference type="EC" id="3.2.2.27"/>
    </reaction>
</comment>
<comment type="subcellular location">
    <subcellularLocation>
        <location evidence="1">Cytoplasm</location>
    </subcellularLocation>
</comment>
<comment type="similarity">
    <text evidence="1">Belongs to the uracil-DNA glycosylase (UDG) superfamily. UNG family.</text>
</comment>
<name>UNG_ECOLC</name>
<reference key="1">
    <citation type="submission" date="2008-02" db="EMBL/GenBank/DDBJ databases">
        <title>Complete sequence of Escherichia coli C str. ATCC 8739.</title>
        <authorList>
            <person name="Copeland A."/>
            <person name="Lucas S."/>
            <person name="Lapidus A."/>
            <person name="Glavina del Rio T."/>
            <person name="Dalin E."/>
            <person name="Tice H."/>
            <person name="Bruce D."/>
            <person name="Goodwin L."/>
            <person name="Pitluck S."/>
            <person name="Kiss H."/>
            <person name="Brettin T."/>
            <person name="Detter J.C."/>
            <person name="Han C."/>
            <person name="Kuske C.R."/>
            <person name="Schmutz J."/>
            <person name="Larimer F."/>
            <person name="Land M."/>
            <person name="Hauser L."/>
            <person name="Kyrpides N."/>
            <person name="Mikhailova N."/>
            <person name="Ingram L."/>
            <person name="Richardson P."/>
        </authorList>
    </citation>
    <scope>NUCLEOTIDE SEQUENCE [LARGE SCALE GENOMIC DNA]</scope>
    <source>
        <strain>ATCC 8739 / DSM 1576 / NBRC 3972 / NCIMB 8545 / WDCM 00012 / Crooks</strain>
    </source>
</reference>